<keyword id="KW-0963">Cytoplasm</keyword>
<keyword id="KW-1015">Disulfide bond</keyword>
<keyword id="KW-0274">FAD</keyword>
<keyword id="KW-0285">Flavoprotein</keyword>
<keyword id="KW-0521">NADP</keyword>
<keyword id="KW-0560">Oxidoreductase</keyword>
<keyword id="KW-0676">Redox-active center</keyword>
<keyword id="KW-1185">Reference proteome</keyword>
<feature type="initiator methionine" description="Removed" evidence="1">
    <location>
        <position position="1"/>
    </location>
</feature>
<feature type="chain" id="PRO_0000166730" description="Thioredoxin reductase">
    <location>
        <begin position="2"/>
        <end position="321"/>
    </location>
</feature>
<feature type="binding site" evidence="2">
    <location>
        <begin position="36"/>
        <end position="43"/>
    </location>
    <ligand>
        <name>FAD</name>
        <dbReference type="ChEBI" id="CHEBI:57692"/>
    </ligand>
</feature>
<feature type="binding site" evidence="2">
    <location>
        <begin position="287"/>
        <end position="296"/>
    </location>
    <ligand>
        <name>FAD</name>
        <dbReference type="ChEBI" id="CHEBI:57692"/>
    </ligand>
</feature>
<feature type="disulfide bond" description="Redox-active" evidence="2">
    <location>
        <begin position="136"/>
        <end position="139"/>
    </location>
</feature>
<name>TRXB_ECO57</name>
<sequence>MGTTKHSKLLILGSGPAGYTAAVYAARANLQPVLITGMEKGGQLTTTTEVENWPGDPNDLTGPLLMERMHEHATKFETEIIFDHINKVDLQNRPFRLNGDNGEYTCDALIIATGASARYLGLPSEEAFKGRGVSACATCDGFFYRNQKVAVIGGGNTAVEEALYLSNIASEVHLIHRRDGFRAEKILIKRLMDKVENGNIILHTNRTLEEVTGDQMGVTGVRLRDTQNSDNIESLDVAGLFVAIGHSPNTAIFEGQLELENGYIKVQSGIHGNATQTSIPGVFAAGDVMDHIYRQAITSAGTGCMAALDAERYLDGLADAK</sequence>
<dbReference type="EC" id="1.8.1.9"/>
<dbReference type="EMBL" id="AE005174">
    <property type="protein sequence ID" value="AAG55375.1"/>
    <property type="molecule type" value="Genomic_DNA"/>
</dbReference>
<dbReference type="EMBL" id="BA000007">
    <property type="protein sequence ID" value="BAB34396.1"/>
    <property type="molecule type" value="Genomic_DNA"/>
</dbReference>
<dbReference type="PIR" id="C85614">
    <property type="entry name" value="C85614"/>
</dbReference>
<dbReference type="PIR" id="E90750">
    <property type="entry name" value="E90750"/>
</dbReference>
<dbReference type="RefSeq" id="NP_309000.1">
    <property type="nucleotide sequence ID" value="NC_002695.1"/>
</dbReference>
<dbReference type="RefSeq" id="WP_000537418.1">
    <property type="nucleotide sequence ID" value="NZ_VOAI01000006.1"/>
</dbReference>
<dbReference type="SMR" id="P0A9P5"/>
<dbReference type="STRING" id="155864.Z1232"/>
<dbReference type="GeneID" id="917715"/>
<dbReference type="GeneID" id="93776532"/>
<dbReference type="KEGG" id="ece:Z1232"/>
<dbReference type="KEGG" id="ecs:ECs_0973"/>
<dbReference type="PATRIC" id="fig|386585.9.peg.1089"/>
<dbReference type="eggNOG" id="COG0492">
    <property type="taxonomic scope" value="Bacteria"/>
</dbReference>
<dbReference type="HOGENOM" id="CLU_031864_5_1_6"/>
<dbReference type="OMA" id="GPCHVLK"/>
<dbReference type="Proteomes" id="UP000000558">
    <property type="component" value="Chromosome"/>
</dbReference>
<dbReference type="Proteomes" id="UP000002519">
    <property type="component" value="Chromosome"/>
</dbReference>
<dbReference type="GO" id="GO:0005737">
    <property type="term" value="C:cytoplasm"/>
    <property type="evidence" value="ECO:0007669"/>
    <property type="project" value="UniProtKB-SubCell"/>
</dbReference>
<dbReference type="GO" id="GO:0004791">
    <property type="term" value="F:thioredoxin-disulfide reductase (NADPH) activity"/>
    <property type="evidence" value="ECO:0007669"/>
    <property type="project" value="UniProtKB-EC"/>
</dbReference>
<dbReference type="GO" id="GO:0019430">
    <property type="term" value="P:removal of superoxide radicals"/>
    <property type="evidence" value="ECO:0007669"/>
    <property type="project" value="InterPro"/>
</dbReference>
<dbReference type="FunFam" id="3.50.50.60:FF:000007">
    <property type="entry name" value="Alkyl hydroperoxide reductase, F subunit"/>
    <property type="match status" value="1"/>
</dbReference>
<dbReference type="Gene3D" id="3.50.50.60">
    <property type="entry name" value="FAD/NAD(P)-binding domain"/>
    <property type="match status" value="2"/>
</dbReference>
<dbReference type="InterPro" id="IPR036188">
    <property type="entry name" value="FAD/NAD-bd_sf"/>
</dbReference>
<dbReference type="InterPro" id="IPR023753">
    <property type="entry name" value="FAD/NAD-binding_dom"/>
</dbReference>
<dbReference type="InterPro" id="IPR050097">
    <property type="entry name" value="Ferredoxin-NADP_redctase_2"/>
</dbReference>
<dbReference type="InterPro" id="IPR008255">
    <property type="entry name" value="Pyr_nucl-diS_OxRdtase_2_AS"/>
</dbReference>
<dbReference type="InterPro" id="IPR005982">
    <property type="entry name" value="Thioredox_Rdtase"/>
</dbReference>
<dbReference type="NCBIfam" id="NF007614">
    <property type="entry name" value="PRK10262.1"/>
    <property type="match status" value="1"/>
</dbReference>
<dbReference type="NCBIfam" id="TIGR01292">
    <property type="entry name" value="TRX_reduct"/>
    <property type="match status" value="1"/>
</dbReference>
<dbReference type="PANTHER" id="PTHR48105">
    <property type="entry name" value="THIOREDOXIN REDUCTASE 1-RELATED-RELATED"/>
    <property type="match status" value="1"/>
</dbReference>
<dbReference type="Pfam" id="PF07992">
    <property type="entry name" value="Pyr_redox_2"/>
    <property type="match status" value="1"/>
</dbReference>
<dbReference type="PRINTS" id="PR00368">
    <property type="entry name" value="FADPNR"/>
</dbReference>
<dbReference type="PRINTS" id="PR00469">
    <property type="entry name" value="PNDRDTASEII"/>
</dbReference>
<dbReference type="SUPFAM" id="SSF51905">
    <property type="entry name" value="FAD/NAD(P)-binding domain"/>
    <property type="match status" value="1"/>
</dbReference>
<dbReference type="PROSITE" id="PS00573">
    <property type="entry name" value="PYRIDINE_REDOX_2"/>
    <property type="match status" value="1"/>
</dbReference>
<proteinExistence type="inferred from homology"/>
<gene>
    <name type="primary">trxB</name>
    <name type="ordered locus">Z1232</name>
    <name type="ordered locus">ECs0973</name>
</gene>
<organism>
    <name type="scientific">Escherichia coli O157:H7</name>
    <dbReference type="NCBI Taxonomy" id="83334"/>
    <lineage>
        <taxon>Bacteria</taxon>
        <taxon>Pseudomonadati</taxon>
        <taxon>Pseudomonadota</taxon>
        <taxon>Gammaproteobacteria</taxon>
        <taxon>Enterobacterales</taxon>
        <taxon>Enterobacteriaceae</taxon>
        <taxon>Escherichia</taxon>
    </lineage>
</organism>
<accession>P0A9P5</accession>
<accession>P09625</accession>
<protein>
    <recommendedName>
        <fullName>Thioredoxin reductase</fullName>
        <shortName>TRXR</shortName>
        <ecNumber>1.8.1.9</ecNumber>
    </recommendedName>
</protein>
<reference key="1">
    <citation type="journal article" date="2001" name="Nature">
        <title>Genome sequence of enterohaemorrhagic Escherichia coli O157:H7.</title>
        <authorList>
            <person name="Perna N.T."/>
            <person name="Plunkett G. III"/>
            <person name="Burland V."/>
            <person name="Mau B."/>
            <person name="Glasner J.D."/>
            <person name="Rose D.J."/>
            <person name="Mayhew G.F."/>
            <person name="Evans P.S."/>
            <person name="Gregor J."/>
            <person name="Kirkpatrick H.A."/>
            <person name="Posfai G."/>
            <person name="Hackett J."/>
            <person name="Klink S."/>
            <person name="Boutin A."/>
            <person name="Shao Y."/>
            <person name="Miller L."/>
            <person name="Grotbeck E.J."/>
            <person name="Davis N.W."/>
            <person name="Lim A."/>
            <person name="Dimalanta E.T."/>
            <person name="Potamousis K."/>
            <person name="Apodaca J."/>
            <person name="Anantharaman T.S."/>
            <person name="Lin J."/>
            <person name="Yen G."/>
            <person name="Schwartz D.C."/>
            <person name="Welch R.A."/>
            <person name="Blattner F.R."/>
        </authorList>
    </citation>
    <scope>NUCLEOTIDE SEQUENCE [LARGE SCALE GENOMIC DNA]</scope>
    <source>
        <strain>O157:H7 / EDL933 / ATCC 700927 / EHEC</strain>
    </source>
</reference>
<reference key="2">
    <citation type="journal article" date="2001" name="DNA Res.">
        <title>Complete genome sequence of enterohemorrhagic Escherichia coli O157:H7 and genomic comparison with a laboratory strain K-12.</title>
        <authorList>
            <person name="Hayashi T."/>
            <person name="Makino K."/>
            <person name="Ohnishi M."/>
            <person name="Kurokawa K."/>
            <person name="Ishii K."/>
            <person name="Yokoyama K."/>
            <person name="Han C.-G."/>
            <person name="Ohtsubo E."/>
            <person name="Nakayama K."/>
            <person name="Murata T."/>
            <person name="Tanaka M."/>
            <person name="Tobe T."/>
            <person name="Iida T."/>
            <person name="Takami H."/>
            <person name="Honda T."/>
            <person name="Sasakawa C."/>
            <person name="Ogasawara N."/>
            <person name="Yasunaga T."/>
            <person name="Kuhara S."/>
            <person name="Shiba T."/>
            <person name="Hattori M."/>
            <person name="Shinagawa H."/>
        </authorList>
    </citation>
    <scope>NUCLEOTIDE SEQUENCE [LARGE SCALE GENOMIC DNA]</scope>
    <source>
        <strain>O157:H7 / Sakai / RIMD 0509952 / EHEC</strain>
    </source>
</reference>
<evidence type="ECO:0000250" key="1"/>
<evidence type="ECO:0000250" key="2">
    <source>
        <dbReference type="UniProtKB" id="P0A9P4"/>
    </source>
</evidence>
<evidence type="ECO:0000305" key="3"/>
<comment type="catalytic activity">
    <reaction>
        <text>[thioredoxin]-dithiol + NADP(+) = [thioredoxin]-disulfide + NADPH + H(+)</text>
        <dbReference type="Rhea" id="RHEA:20345"/>
        <dbReference type="Rhea" id="RHEA-COMP:10698"/>
        <dbReference type="Rhea" id="RHEA-COMP:10700"/>
        <dbReference type="ChEBI" id="CHEBI:15378"/>
        <dbReference type="ChEBI" id="CHEBI:29950"/>
        <dbReference type="ChEBI" id="CHEBI:50058"/>
        <dbReference type="ChEBI" id="CHEBI:57783"/>
        <dbReference type="ChEBI" id="CHEBI:58349"/>
        <dbReference type="EC" id="1.8.1.9"/>
    </reaction>
</comment>
<comment type="cofactor">
    <cofactor evidence="2">
        <name>FAD</name>
        <dbReference type="ChEBI" id="CHEBI:57692"/>
    </cofactor>
    <text evidence="2">Binds 1 FAD per subunit.</text>
</comment>
<comment type="subunit">
    <text evidence="2">Homodimer.</text>
</comment>
<comment type="subcellular location">
    <subcellularLocation>
        <location evidence="1">Cytoplasm</location>
    </subcellularLocation>
</comment>
<comment type="miscellaneous">
    <text evidence="1">The active site is a redox-active disulfide bond.</text>
</comment>
<comment type="similarity">
    <text evidence="3">Belongs to the class-II pyridine nucleotide-disulfide oxidoreductase family.</text>
</comment>